<evidence type="ECO:0000255" key="1">
    <source>
        <dbReference type="HAMAP-Rule" id="MF_00198"/>
    </source>
</evidence>
<name>SPEE_SODGM</name>
<organism>
    <name type="scientific">Sodalis glossinidius (strain morsitans)</name>
    <dbReference type="NCBI Taxonomy" id="343509"/>
    <lineage>
        <taxon>Bacteria</taxon>
        <taxon>Pseudomonadati</taxon>
        <taxon>Pseudomonadota</taxon>
        <taxon>Gammaproteobacteria</taxon>
        <taxon>Enterobacterales</taxon>
        <taxon>Bruguierivoracaceae</taxon>
        <taxon>Sodalis</taxon>
    </lineage>
</organism>
<gene>
    <name evidence="1" type="primary">speE</name>
    <name type="ordered locus">SG0479</name>
</gene>
<feature type="chain" id="PRO_1000012022" description="Polyamine aminopropyltransferase">
    <location>
        <begin position="1"/>
        <end position="287"/>
    </location>
</feature>
<feature type="domain" description="PABS" evidence="1">
    <location>
        <begin position="5"/>
        <end position="238"/>
    </location>
</feature>
<feature type="active site" description="Proton acceptor" evidence="1">
    <location>
        <position position="158"/>
    </location>
</feature>
<feature type="binding site" evidence="1">
    <location>
        <position position="33"/>
    </location>
    <ligand>
        <name>S-methyl-5'-thioadenosine</name>
        <dbReference type="ChEBI" id="CHEBI:17509"/>
    </ligand>
</feature>
<feature type="binding site" evidence="1">
    <location>
        <position position="64"/>
    </location>
    <ligand>
        <name>spermidine</name>
        <dbReference type="ChEBI" id="CHEBI:57834"/>
    </ligand>
</feature>
<feature type="binding site" evidence="1">
    <location>
        <position position="88"/>
    </location>
    <ligand>
        <name>spermidine</name>
        <dbReference type="ChEBI" id="CHEBI:57834"/>
    </ligand>
</feature>
<feature type="binding site" evidence="1">
    <location>
        <position position="108"/>
    </location>
    <ligand>
        <name>S-methyl-5'-thioadenosine</name>
        <dbReference type="ChEBI" id="CHEBI:17509"/>
    </ligand>
</feature>
<feature type="binding site" evidence="1">
    <location>
        <begin position="140"/>
        <end position="141"/>
    </location>
    <ligand>
        <name>S-methyl-5'-thioadenosine</name>
        <dbReference type="ChEBI" id="CHEBI:17509"/>
    </ligand>
</feature>
<feature type="binding site" evidence="1">
    <location>
        <begin position="158"/>
        <end position="161"/>
    </location>
    <ligand>
        <name>spermidine</name>
        <dbReference type="ChEBI" id="CHEBI:57834"/>
    </ligand>
</feature>
<feature type="binding site" evidence="1">
    <location>
        <position position="165"/>
    </location>
    <ligand>
        <name>S-methyl-5'-thioadenosine</name>
        <dbReference type="ChEBI" id="CHEBI:17509"/>
    </ligand>
</feature>
<protein>
    <recommendedName>
        <fullName evidence="1">Polyamine aminopropyltransferase</fullName>
    </recommendedName>
    <alternativeName>
        <fullName evidence="1">Putrescine aminopropyltransferase</fullName>
        <shortName evidence="1">PAPT</shortName>
    </alternativeName>
    <alternativeName>
        <fullName evidence="1">Spermidine synthase</fullName>
        <shortName evidence="1">SPDS</shortName>
        <shortName evidence="1">SPDSY</shortName>
        <ecNumber evidence="1">2.5.1.16</ecNumber>
    </alternativeName>
</protein>
<dbReference type="EC" id="2.5.1.16" evidence="1"/>
<dbReference type="EMBL" id="AP008232">
    <property type="protein sequence ID" value="BAE73754.1"/>
    <property type="molecule type" value="Genomic_DNA"/>
</dbReference>
<dbReference type="RefSeq" id="WP_011410452.1">
    <property type="nucleotide sequence ID" value="NC_007712.1"/>
</dbReference>
<dbReference type="SMR" id="Q2NVS1"/>
<dbReference type="STRING" id="343509.SG0479"/>
<dbReference type="KEGG" id="sgl:SG0479"/>
<dbReference type="eggNOG" id="COG0421">
    <property type="taxonomic scope" value="Bacteria"/>
</dbReference>
<dbReference type="HOGENOM" id="CLU_048199_0_0_6"/>
<dbReference type="OrthoDB" id="9793120at2"/>
<dbReference type="BioCyc" id="SGLO343509:SGP1_RS04285-MONOMER"/>
<dbReference type="UniPathway" id="UPA00248">
    <property type="reaction ID" value="UER00314"/>
</dbReference>
<dbReference type="Proteomes" id="UP000001932">
    <property type="component" value="Chromosome"/>
</dbReference>
<dbReference type="GO" id="GO:0005829">
    <property type="term" value="C:cytosol"/>
    <property type="evidence" value="ECO:0007669"/>
    <property type="project" value="TreeGrafter"/>
</dbReference>
<dbReference type="GO" id="GO:0004766">
    <property type="term" value="F:spermidine synthase activity"/>
    <property type="evidence" value="ECO:0007669"/>
    <property type="project" value="UniProtKB-UniRule"/>
</dbReference>
<dbReference type="GO" id="GO:0008295">
    <property type="term" value="P:spermidine biosynthetic process"/>
    <property type="evidence" value="ECO:0007669"/>
    <property type="project" value="UniProtKB-UniRule"/>
</dbReference>
<dbReference type="CDD" id="cd02440">
    <property type="entry name" value="AdoMet_MTases"/>
    <property type="match status" value="1"/>
</dbReference>
<dbReference type="FunFam" id="2.30.140.10:FF:000002">
    <property type="entry name" value="Polyamine aminopropyltransferase"/>
    <property type="match status" value="1"/>
</dbReference>
<dbReference type="FunFam" id="3.40.50.150:FF:000026">
    <property type="entry name" value="Polyamine aminopropyltransferase"/>
    <property type="match status" value="1"/>
</dbReference>
<dbReference type="Gene3D" id="2.30.140.10">
    <property type="entry name" value="Spermidine synthase, tetramerisation domain"/>
    <property type="match status" value="1"/>
</dbReference>
<dbReference type="Gene3D" id="3.40.50.150">
    <property type="entry name" value="Vaccinia Virus protein VP39"/>
    <property type="match status" value="1"/>
</dbReference>
<dbReference type="HAMAP" id="MF_00198">
    <property type="entry name" value="Spermidine_synth"/>
    <property type="match status" value="1"/>
</dbReference>
<dbReference type="InterPro" id="IPR030374">
    <property type="entry name" value="PABS"/>
</dbReference>
<dbReference type="InterPro" id="IPR030373">
    <property type="entry name" value="PABS_CS"/>
</dbReference>
<dbReference type="InterPro" id="IPR029063">
    <property type="entry name" value="SAM-dependent_MTases_sf"/>
</dbReference>
<dbReference type="InterPro" id="IPR001045">
    <property type="entry name" value="Spermi_synthase"/>
</dbReference>
<dbReference type="InterPro" id="IPR035246">
    <property type="entry name" value="Spermidine_synt_N"/>
</dbReference>
<dbReference type="InterPro" id="IPR037163">
    <property type="entry name" value="Spermidine_synt_N_sf"/>
</dbReference>
<dbReference type="NCBIfam" id="NF037959">
    <property type="entry name" value="MFS_SpdSyn"/>
    <property type="match status" value="1"/>
</dbReference>
<dbReference type="NCBIfam" id="NF002010">
    <property type="entry name" value="PRK00811.1"/>
    <property type="match status" value="1"/>
</dbReference>
<dbReference type="NCBIfam" id="TIGR00417">
    <property type="entry name" value="speE"/>
    <property type="match status" value="1"/>
</dbReference>
<dbReference type="PANTHER" id="PTHR11558:SF11">
    <property type="entry name" value="SPERMIDINE SYNTHASE"/>
    <property type="match status" value="1"/>
</dbReference>
<dbReference type="PANTHER" id="PTHR11558">
    <property type="entry name" value="SPERMIDINE/SPERMINE SYNTHASE"/>
    <property type="match status" value="1"/>
</dbReference>
<dbReference type="Pfam" id="PF17284">
    <property type="entry name" value="Spermine_synt_N"/>
    <property type="match status" value="1"/>
</dbReference>
<dbReference type="Pfam" id="PF01564">
    <property type="entry name" value="Spermine_synth"/>
    <property type="match status" value="1"/>
</dbReference>
<dbReference type="SUPFAM" id="SSF53335">
    <property type="entry name" value="S-adenosyl-L-methionine-dependent methyltransferases"/>
    <property type="match status" value="1"/>
</dbReference>
<dbReference type="PROSITE" id="PS01330">
    <property type="entry name" value="PABS_1"/>
    <property type="match status" value="1"/>
</dbReference>
<dbReference type="PROSITE" id="PS51006">
    <property type="entry name" value="PABS_2"/>
    <property type="match status" value="1"/>
</dbReference>
<accession>Q2NVS1</accession>
<proteinExistence type="inferred from homology"/>
<keyword id="KW-0963">Cytoplasm</keyword>
<keyword id="KW-0620">Polyamine biosynthesis</keyword>
<keyword id="KW-0745">Spermidine biosynthesis</keyword>
<keyword id="KW-0808">Transferase</keyword>
<reference key="1">
    <citation type="journal article" date="2006" name="Genome Res.">
        <title>Massive genome erosion and functional adaptations provide insights into the symbiotic lifestyle of Sodalis glossinidius in the tsetse host.</title>
        <authorList>
            <person name="Toh H."/>
            <person name="Weiss B.L."/>
            <person name="Perkin S.A.H."/>
            <person name="Yamashita A."/>
            <person name="Oshima K."/>
            <person name="Hattori M."/>
            <person name="Aksoy S."/>
        </authorList>
    </citation>
    <scope>NUCLEOTIDE SEQUENCE [LARGE SCALE GENOMIC DNA]</scope>
    <source>
        <strain>morsitans</strain>
    </source>
</reference>
<comment type="function">
    <text evidence="1">Catalyzes the irreversible transfer of a propylamine group from the amino donor S-adenosylmethioninamine (decarboxy-AdoMet) to putrescine (1,4-diaminobutane) to yield spermidine.</text>
</comment>
<comment type="catalytic activity">
    <reaction evidence="1">
        <text>S-adenosyl 3-(methylsulfanyl)propylamine + putrescine = S-methyl-5'-thioadenosine + spermidine + H(+)</text>
        <dbReference type="Rhea" id="RHEA:12721"/>
        <dbReference type="ChEBI" id="CHEBI:15378"/>
        <dbReference type="ChEBI" id="CHEBI:17509"/>
        <dbReference type="ChEBI" id="CHEBI:57443"/>
        <dbReference type="ChEBI" id="CHEBI:57834"/>
        <dbReference type="ChEBI" id="CHEBI:326268"/>
        <dbReference type="EC" id="2.5.1.16"/>
    </reaction>
</comment>
<comment type="pathway">
    <text evidence="1">Amine and polyamine biosynthesis; spermidine biosynthesis; spermidine from putrescine: step 1/1.</text>
</comment>
<comment type="subunit">
    <text evidence="1">Homodimer or homotetramer.</text>
</comment>
<comment type="subcellular location">
    <subcellularLocation>
        <location evidence="1">Cytoplasm</location>
    </subcellularLocation>
</comment>
<comment type="similarity">
    <text evidence="1">Belongs to the spermidine/spermine synthase family.</text>
</comment>
<sequence length="287" mass="31881">MSHQETWHETLHDHFGQYFTVDNLLYRDTTGQQDLVIFENAALGRVMALDGVVQTTERDEFIYHEMMAHVPLIAHGGAKKVLIIGGGDGGMLREVSRHPGVEQITMVEIDAGVVTFCKQYLPRHNAGAFDDPRFKLVIADGVNFVSQSSEKFDVIISDCTDPIGPGESLFTSNFYQDCARCLNEGGIFVAQNGVCFLQQDEVVNSHRKLGHYFSDISFYQAAVPTYYGGIMTFAWASQNPALRQLDTATLAARIDETALTCRYYNAAIHHGSFALPQYLLNALSASR</sequence>